<reference key="1">
    <citation type="journal article" date="2003" name="Proc. Natl. Acad. Sci. U.S.A.">
        <title>The complete genome sequence of Mycobacterium bovis.</title>
        <authorList>
            <person name="Garnier T."/>
            <person name="Eiglmeier K."/>
            <person name="Camus J.-C."/>
            <person name="Medina N."/>
            <person name="Mansoor H."/>
            <person name="Pryor M."/>
            <person name="Duthoy S."/>
            <person name="Grondin S."/>
            <person name="Lacroix C."/>
            <person name="Monsempe C."/>
            <person name="Simon S."/>
            <person name="Harris B."/>
            <person name="Atkin R."/>
            <person name="Doggett J."/>
            <person name="Mayes R."/>
            <person name="Keating L."/>
            <person name="Wheeler P.R."/>
            <person name="Parkhill J."/>
            <person name="Barrell B.G."/>
            <person name="Cole S.T."/>
            <person name="Gordon S.V."/>
            <person name="Hewinson R.G."/>
        </authorList>
    </citation>
    <scope>NUCLEOTIDE SEQUENCE [LARGE SCALE GENOMIC DNA]</scope>
    <source>
        <strain>ATCC BAA-935 / AF2122/97</strain>
    </source>
</reference>
<reference key="2">
    <citation type="journal article" date="2017" name="Genome Announc.">
        <title>Updated reference genome sequence and annotation of Mycobacterium bovis AF2122/97.</title>
        <authorList>
            <person name="Malone K.M."/>
            <person name="Farrell D."/>
            <person name="Stuber T.P."/>
            <person name="Schubert O.T."/>
            <person name="Aebersold R."/>
            <person name="Robbe-Austerman S."/>
            <person name="Gordon S.V."/>
        </authorList>
    </citation>
    <scope>NUCLEOTIDE SEQUENCE [LARGE SCALE GENOMIC DNA]</scope>
    <scope>GENOME REANNOTATION</scope>
    <source>
        <strain>ATCC BAA-935 / AF2122/97</strain>
    </source>
</reference>
<protein>
    <recommendedName>
        <fullName>Precorrin-8X methylmutase</fullName>
        <ecNumber>5.4.99.61</ecNumber>
    </recommendedName>
    <alternativeName>
        <fullName>HBA synthase</fullName>
    </alternativeName>
    <alternativeName>
        <fullName>Precorrin isomerase</fullName>
    </alternativeName>
</protein>
<name>COBH_MYCBO</name>
<organism>
    <name type="scientific">Mycobacterium bovis (strain ATCC BAA-935 / AF2122/97)</name>
    <dbReference type="NCBI Taxonomy" id="233413"/>
    <lineage>
        <taxon>Bacteria</taxon>
        <taxon>Bacillati</taxon>
        <taxon>Actinomycetota</taxon>
        <taxon>Actinomycetes</taxon>
        <taxon>Mycobacteriales</taxon>
        <taxon>Mycobacteriaceae</taxon>
        <taxon>Mycobacterium</taxon>
        <taxon>Mycobacterium tuberculosis complex</taxon>
    </lineage>
</organism>
<proteinExistence type="inferred from homology"/>
<feature type="chain" id="PRO_0000135925" description="Precorrin-8X methylmutase">
    <location>
        <begin position="1"/>
        <end position="208"/>
    </location>
</feature>
<feature type="active site" description="Proton donor/acceptor" evidence="1">
    <location>
        <position position="41"/>
    </location>
</feature>
<feature type="binding site" evidence="1">
    <location>
        <position position="15"/>
    </location>
    <ligand>
        <name>substrate</name>
    </ligand>
</feature>
<feature type="binding site" evidence="1">
    <location>
        <position position="38"/>
    </location>
    <ligand>
        <name>substrate</name>
    </ligand>
</feature>
<dbReference type="EC" id="5.4.99.61"/>
<dbReference type="EMBL" id="LT708304">
    <property type="protein sequence ID" value="SIU00698.1"/>
    <property type="molecule type" value="Genomic_DNA"/>
</dbReference>
<dbReference type="RefSeq" id="NP_855741.1">
    <property type="nucleotide sequence ID" value="NC_002945.3"/>
</dbReference>
<dbReference type="RefSeq" id="WP_003410658.1">
    <property type="nucleotide sequence ID" value="NC_002945.4"/>
</dbReference>
<dbReference type="SMR" id="P63840"/>
<dbReference type="KEGG" id="mbo:BQ2027_MB2091"/>
<dbReference type="PATRIC" id="fig|233413.5.peg.2299"/>
<dbReference type="UniPathway" id="UPA00148">
    <property type="reaction ID" value="UER00219"/>
</dbReference>
<dbReference type="Proteomes" id="UP000001419">
    <property type="component" value="Chromosome"/>
</dbReference>
<dbReference type="GO" id="GO:0016993">
    <property type="term" value="F:precorrin-8X methylmutase activity"/>
    <property type="evidence" value="ECO:0007669"/>
    <property type="project" value="UniProtKB-EC"/>
</dbReference>
<dbReference type="GO" id="GO:0009236">
    <property type="term" value="P:cobalamin biosynthetic process"/>
    <property type="evidence" value="ECO:0007669"/>
    <property type="project" value="UniProtKB-UniPathway"/>
</dbReference>
<dbReference type="Gene3D" id="3.40.50.10230">
    <property type="entry name" value="Cobalamin biosynthesis CobH/CbiC, precorrin-8X methylmutase"/>
    <property type="match status" value="1"/>
</dbReference>
<dbReference type="InterPro" id="IPR003722">
    <property type="entry name" value="Cbl_synth_CobH/CbiC"/>
</dbReference>
<dbReference type="InterPro" id="IPR036588">
    <property type="entry name" value="CobH/CbiC_sf"/>
</dbReference>
<dbReference type="NCBIfam" id="NF006136">
    <property type="entry name" value="PRK08285.1"/>
    <property type="match status" value="1"/>
</dbReference>
<dbReference type="PANTHER" id="PTHR43588">
    <property type="entry name" value="COBALT-PRECORRIN-8 METHYLMUTASE"/>
    <property type="match status" value="1"/>
</dbReference>
<dbReference type="PANTHER" id="PTHR43588:SF1">
    <property type="entry name" value="COBALT-PRECORRIN-8 METHYLMUTASE"/>
    <property type="match status" value="1"/>
</dbReference>
<dbReference type="Pfam" id="PF02570">
    <property type="entry name" value="CbiC"/>
    <property type="match status" value="1"/>
</dbReference>
<dbReference type="SUPFAM" id="SSF63965">
    <property type="entry name" value="Precorrin-8X methylmutase CbiC/CobH"/>
    <property type="match status" value="1"/>
</dbReference>
<sequence length="208" mass="21614">MLDYLRDAAEIYRRSFAVIRAEADLARFPADVARVVVRLIHTCGQVDVAEHVAYTDDVVARAGAALAAGAPVLCDSSMVAAGITTSRLPADNQIVSLVADPRATELAARRQTTRSAAGVELCAERLPGAVLAIGNAPTALFRLLELVDEGAPPPAAVLGGPVGFVGSAQAKEELIERPRGMSYLVVRGRRGGSAMAAAAVNAIASDRE</sequence>
<evidence type="ECO:0000250" key="1"/>
<evidence type="ECO:0000305" key="2"/>
<comment type="function">
    <text evidence="1">Catalyzes the conversion of precorrin-8X to hydrogenobyrinate.</text>
</comment>
<comment type="catalytic activity">
    <reaction>
        <text>precorrin-8X + 3 H(+) = hydrogenobyrinate</text>
        <dbReference type="Rhea" id="RHEA:22512"/>
        <dbReference type="ChEBI" id="CHEBI:15378"/>
        <dbReference type="ChEBI" id="CHEBI:58581"/>
        <dbReference type="ChEBI" id="CHEBI:77873"/>
        <dbReference type="EC" id="5.4.99.61"/>
    </reaction>
</comment>
<comment type="pathway">
    <text>Cofactor biosynthesis; adenosylcobalamin biosynthesis; cob(II)yrinate a,c-diamide from precorrin-2 (aerobic route): step 8/10.</text>
</comment>
<comment type="similarity">
    <text evidence="2">Belongs to the CobH/CbiC family.</text>
</comment>
<gene>
    <name type="primary">cobH</name>
    <name type="ordered locus">BQ2027_MB2091</name>
</gene>
<accession>P63840</accession>
<accession>A0A1R3Y023</accession>
<accession>Q10676</accession>
<accession>X2BJM5</accession>
<keyword id="KW-0169">Cobalamin biosynthesis</keyword>
<keyword id="KW-0413">Isomerase</keyword>
<keyword id="KW-1185">Reference proteome</keyword>